<gene>
    <name evidence="1" type="primary">rutF</name>
    <name type="ordered locus">ECIAI39_2148</name>
</gene>
<name>RUTF_ECO7I</name>
<protein>
    <recommendedName>
        <fullName evidence="1">FMN reductase (NADH) RutF</fullName>
        <ecNumber evidence="1">1.5.1.42</ecNumber>
    </recommendedName>
    <alternativeName>
        <fullName evidence="1">FMN reductase</fullName>
    </alternativeName>
    <alternativeName>
        <fullName evidence="1">NADH-flavin reductase RutF</fullName>
    </alternativeName>
    <alternativeName>
        <fullName evidence="1">NADH:flavin oxidoreductase</fullName>
    </alternativeName>
</protein>
<organism>
    <name type="scientific">Escherichia coli O7:K1 (strain IAI39 / ExPEC)</name>
    <dbReference type="NCBI Taxonomy" id="585057"/>
    <lineage>
        <taxon>Bacteria</taxon>
        <taxon>Pseudomonadati</taxon>
        <taxon>Pseudomonadota</taxon>
        <taxon>Gammaproteobacteria</taxon>
        <taxon>Enterobacterales</taxon>
        <taxon>Enterobacteriaceae</taxon>
        <taxon>Escherichia</taxon>
    </lineage>
</organism>
<feature type="chain" id="PRO_0000403024" description="FMN reductase (NADH) RutF">
    <location>
        <begin position="1"/>
        <end position="164"/>
    </location>
</feature>
<sequence length="164" mass="17747">MNIVDQQTFRDAMSCMGAAVNIITTDGPAGRAGFTASAVCSVTDTPPTLLVCLNRGASVWPVFNENRTLCVNTLSAGQEPLSNLFGGKTPMEHRFAAARWQTGVTGCPQLEEALVSFDCRISQVVSVGTHDILFCAIEAIHRHATPYGLVWFDRSYHALMRPAC</sequence>
<proteinExistence type="inferred from homology"/>
<dbReference type="EC" id="1.5.1.42" evidence="1"/>
<dbReference type="EMBL" id="CU928164">
    <property type="protein sequence ID" value="CAR18275.1"/>
    <property type="molecule type" value="Genomic_DNA"/>
</dbReference>
<dbReference type="RefSeq" id="WP_001028095.1">
    <property type="nucleotide sequence ID" value="NC_011750.1"/>
</dbReference>
<dbReference type="RefSeq" id="YP_002408111.1">
    <property type="nucleotide sequence ID" value="NC_011750.1"/>
</dbReference>
<dbReference type="SMR" id="B7NLB9"/>
<dbReference type="STRING" id="585057.ECIAI39_2148"/>
<dbReference type="GeneID" id="75171083"/>
<dbReference type="KEGG" id="ect:ECIAI39_2148"/>
<dbReference type="PATRIC" id="fig|585057.6.peg.2236"/>
<dbReference type="HOGENOM" id="CLU_059021_2_2_6"/>
<dbReference type="Proteomes" id="UP000000749">
    <property type="component" value="Chromosome"/>
</dbReference>
<dbReference type="GO" id="GO:0010181">
    <property type="term" value="F:FMN binding"/>
    <property type="evidence" value="ECO:0007669"/>
    <property type="project" value="InterPro"/>
</dbReference>
<dbReference type="GO" id="GO:0052874">
    <property type="term" value="F:FMN reductase (NADH) activity"/>
    <property type="evidence" value="ECO:0007669"/>
    <property type="project" value="UniProtKB-EC"/>
</dbReference>
<dbReference type="GO" id="GO:0008752">
    <property type="term" value="F:FMN reductase [NAD(P)H] activity"/>
    <property type="evidence" value="ECO:0007669"/>
    <property type="project" value="InterPro"/>
</dbReference>
<dbReference type="GO" id="GO:0042602">
    <property type="term" value="F:riboflavin reductase (NADPH) activity"/>
    <property type="evidence" value="ECO:0007669"/>
    <property type="project" value="UniProtKB-UniRule"/>
</dbReference>
<dbReference type="GO" id="GO:0019740">
    <property type="term" value="P:nitrogen utilization"/>
    <property type="evidence" value="ECO:0007669"/>
    <property type="project" value="UniProtKB-UniRule"/>
</dbReference>
<dbReference type="GO" id="GO:0006212">
    <property type="term" value="P:uracil catabolic process"/>
    <property type="evidence" value="ECO:0007669"/>
    <property type="project" value="UniProtKB-UniRule"/>
</dbReference>
<dbReference type="FunFam" id="2.30.110.10:FF:000002">
    <property type="entry name" value="FMN reductase (NADH) RutF"/>
    <property type="match status" value="1"/>
</dbReference>
<dbReference type="Gene3D" id="2.30.110.10">
    <property type="entry name" value="Electron Transport, Fmn-binding Protein, Chain A"/>
    <property type="match status" value="1"/>
</dbReference>
<dbReference type="HAMAP" id="MF_00833">
    <property type="entry name" value="RutF"/>
    <property type="match status" value="1"/>
</dbReference>
<dbReference type="InterPro" id="IPR002563">
    <property type="entry name" value="Flavin_Rdtase-like_dom"/>
</dbReference>
<dbReference type="InterPro" id="IPR050268">
    <property type="entry name" value="NADH-dep_flavin_reductase"/>
</dbReference>
<dbReference type="InterPro" id="IPR019917">
    <property type="entry name" value="RutF"/>
</dbReference>
<dbReference type="InterPro" id="IPR012349">
    <property type="entry name" value="Split_barrel_FMN-bd"/>
</dbReference>
<dbReference type="NCBIfam" id="TIGR03615">
    <property type="entry name" value="RutF"/>
    <property type="match status" value="1"/>
</dbReference>
<dbReference type="PANTHER" id="PTHR30466">
    <property type="entry name" value="FLAVIN REDUCTASE"/>
    <property type="match status" value="1"/>
</dbReference>
<dbReference type="PANTHER" id="PTHR30466:SF1">
    <property type="entry name" value="FMN REDUCTASE (NADH) RUTF"/>
    <property type="match status" value="1"/>
</dbReference>
<dbReference type="Pfam" id="PF01613">
    <property type="entry name" value="Flavin_Reduct"/>
    <property type="match status" value="1"/>
</dbReference>
<dbReference type="SMART" id="SM00903">
    <property type="entry name" value="Flavin_Reduct"/>
    <property type="match status" value="1"/>
</dbReference>
<dbReference type="SUPFAM" id="SSF50475">
    <property type="entry name" value="FMN-binding split barrel"/>
    <property type="match status" value="1"/>
</dbReference>
<reference key="1">
    <citation type="journal article" date="2009" name="PLoS Genet.">
        <title>Organised genome dynamics in the Escherichia coli species results in highly diverse adaptive paths.</title>
        <authorList>
            <person name="Touchon M."/>
            <person name="Hoede C."/>
            <person name="Tenaillon O."/>
            <person name="Barbe V."/>
            <person name="Baeriswyl S."/>
            <person name="Bidet P."/>
            <person name="Bingen E."/>
            <person name="Bonacorsi S."/>
            <person name="Bouchier C."/>
            <person name="Bouvet O."/>
            <person name="Calteau A."/>
            <person name="Chiapello H."/>
            <person name="Clermont O."/>
            <person name="Cruveiller S."/>
            <person name="Danchin A."/>
            <person name="Diard M."/>
            <person name="Dossat C."/>
            <person name="Karoui M.E."/>
            <person name="Frapy E."/>
            <person name="Garry L."/>
            <person name="Ghigo J.M."/>
            <person name="Gilles A.M."/>
            <person name="Johnson J."/>
            <person name="Le Bouguenec C."/>
            <person name="Lescat M."/>
            <person name="Mangenot S."/>
            <person name="Martinez-Jehanne V."/>
            <person name="Matic I."/>
            <person name="Nassif X."/>
            <person name="Oztas S."/>
            <person name="Petit M.A."/>
            <person name="Pichon C."/>
            <person name="Rouy Z."/>
            <person name="Ruf C.S."/>
            <person name="Schneider D."/>
            <person name="Tourret J."/>
            <person name="Vacherie B."/>
            <person name="Vallenet D."/>
            <person name="Medigue C."/>
            <person name="Rocha E.P.C."/>
            <person name="Denamur E."/>
        </authorList>
    </citation>
    <scope>NUCLEOTIDE SEQUENCE [LARGE SCALE GENOMIC DNA]</scope>
    <source>
        <strain>IAI39 / ExPEC</strain>
    </source>
</reference>
<keyword id="KW-0285">Flavoprotein</keyword>
<keyword id="KW-0288">FMN</keyword>
<keyword id="KW-0520">NAD</keyword>
<keyword id="KW-0560">Oxidoreductase</keyword>
<comment type="function">
    <text evidence="1">Catalyzes the reduction of FMN to FMNH2 which is used to reduce pyrimidine by RutA via the Rut pathway.</text>
</comment>
<comment type="catalytic activity">
    <reaction evidence="1">
        <text>FMNH2 + NAD(+) = FMN + NADH + 2 H(+)</text>
        <dbReference type="Rhea" id="RHEA:21620"/>
        <dbReference type="ChEBI" id="CHEBI:15378"/>
        <dbReference type="ChEBI" id="CHEBI:57540"/>
        <dbReference type="ChEBI" id="CHEBI:57618"/>
        <dbReference type="ChEBI" id="CHEBI:57945"/>
        <dbReference type="ChEBI" id="CHEBI:58210"/>
        <dbReference type="EC" id="1.5.1.42"/>
    </reaction>
</comment>
<comment type="induction">
    <text evidence="1">Up-regulated by the nitrogen regulatory protein C (NtrC also called GlnG) and repressed by RutR.</text>
</comment>
<comment type="similarity">
    <text evidence="1">Belongs to the non-flavoprotein flavin reductase family. RutF subfamily.</text>
</comment>
<evidence type="ECO:0000255" key="1">
    <source>
        <dbReference type="HAMAP-Rule" id="MF_00833"/>
    </source>
</evidence>
<accession>B7NLB9</accession>